<keyword id="KW-0072">Autophagy</keyword>
<keyword id="KW-0963">Cytoplasm</keyword>
<keyword id="KW-0378">Hydrolase</keyword>
<keyword id="KW-0645">Protease</keyword>
<keyword id="KW-0653">Protein transport</keyword>
<keyword id="KW-1185">Reference proteome</keyword>
<keyword id="KW-0788">Thiol protease</keyword>
<keyword id="KW-0813">Transport</keyword>
<keyword id="KW-0833">Ubl conjugation pathway</keyword>
<feature type="chain" id="PRO_0000215851" description="Cysteine protease ATG4C">
    <location>
        <begin position="1"/>
        <end position="450"/>
    </location>
</feature>
<feature type="active site" description="Nucleophile" evidence="3">
    <location>
        <position position="112"/>
    </location>
</feature>
<feature type="active site" evidence="3">
    <location>
        <position position="336"/>
    </location>
</feature>
<feature type="active site" evidence="3">
    <location>
        <position position="338"/>
    </location>
</feature>
<reference key="1">
    <citation type="submission" date="2004-10" db="EMBL/GenBank/DDBJ databases">
        <authorList>
            <consortium name="NIH - Xenopus Gene Collection (XGC) project"/>
        </authorList>
    </citation>
    <scope>NUCLEOTIDE SEQUENCE [LARGE SCALE MRNA]</scope>
    <source>
        <tissue>Embryo</tissue>
    </source>
</reference>
<proteinExistence type="evidence at transcript level"/>
<sequence length="450" mass="51768">MEASGTDDVEKLKSKFLSAWHNMKYSWVLKTKTYFKRNSPVFLLGKCYHFKYEDSGVTADDCSNSGSDSKEDLSGNVDEFRKDFISRIWLTYRKEFPQIESSSWTTDCGWGCTLRTGQMLLAQGLLVHFLGRDWTWTEALDIFCSESDFWTANTARKLDPSLEKSSPENEEYVSLGKQPLQNSEKKRYSEDLHRKIISWFADYPLAYFGLHQLVKLGKNSGKVAGDWYGPAVVSHLLRKAIEESSDPELQGITIYVAQDCTIYNADVYDLQCNKGNEKAVVILVPVRLGGERTNMEYFEYVKGILSLEFCIGIIGGKPKQSYYFVGFQDDSLIYMDPHYCQSFVDVSIKNFPLESFHCPSPKKMSFKKMDPSCTVGFYCRNAREFEKAAEELTKVLKSSTKQNYPLFTFVNGHAQDFDFVCTPVYDQNDLFTEDEKKRLKRFSTEEFVLL</sequence>
<gene>
    <name evidence="2" type="primary">atg4c</name>
    <name evidence="2" type="synonym">apg4c</name>
</gene>
<accession>Q5XH30</accession>
<organism>
    <name type="scientific">Xenopus laevis</name>
    <name type="common">African clawed frog</name>
    <dbReference type="NCBI Taxonomy" id="8355"/>
    <lineage>
        <taxon>Eukaryota</taxon>
        <taxon>Metazoa</taxon>
        <taxon>Chordata</taxon>
        <taxon>Craniata</taxon>
        <taxon>Vertebrata</taxon>
        <taxon>Euteleostomi</taxon>
        <taxon>Amphibia</taxon>
        <taxon>Batrachia</taxon>
        <taxon>Anura</taxon>
        <taxon>Pipoidea</taxon>
        <taxon>Pipidae</taxon>
        <taxon>Xenopodinae</taxon>
        <taxon>Xenopus</taxon>
        <taxon>Xenopus</taxon>
    </lineage>
</organism>
<comment type="function">
    <text evidence="2 3">Cysteine protease that plays a key role in autophagy by mediating both proteolytic activation and delipidation of ATG8 family proteins. The protease activity is required for proteolytic activation of ATG8 family proteins: cleaves the C-terminal amino acid of ATG8 proteins to reveal a C-terminal glycine (By similarity). Exposure of the glycine at the C-terminus is essential for ATG8 proteins conjugation to phosphatidylethanolamine (PE) and insertion to membranes, which is necessary for autophagy (By similarity). In addition to the protease activity, also mediates delipidation of ATG8 family proteins. Catalyzes delipidation of PE-conjugated forms of ATG8 proteins during macroautophagy (By similarity).</text>
</comment>
<comment type="catalytic activity">
    <reaction evidence="2">
        <text>[protein]-C-terminal L-amino acid-glycyl-phosphatidylethanolamide + H2O = [protein]-C-terminal L-amino acid-glycine + a 1,2-diacyl-sn-glycero-3-phosphoethanolamine</text>
        <dbReference type="Rhea" id="RHEA:67548"/>
        <dbReference type="Rhea" id="RHEA-COMP:17323"/>
        <dbReference type="Rhea" id="RHEA-COMP:17324"/>
        <dbReference type="ChEBI" id="CHEBI:15377"/>
        <dbReference type="ChEBI" id="CHEBI:64612"/>
        <dbReference type="ChEBI" id="CHEBI:172940"/>
        <dbReference type="ChEBI" id="CHEBI:172941"/>
    </reaction>
    <physiologicalReaction direction="left-to-right" evidence="2">
        <dbReference type="Rhea" id="RHEA:67549"/>
    </physiologicalReaction>
</comment>
<comment type="subcellular location">
    <subcellularLocation>
        <location evidence="1">Cytoplasm</location>
    </subcellularLocation>
</comment>
<comment type="similarity">
    <text evidence="4">Belongs to the peptidase C54 family.</text>
</comment>
<name>ATG4C_XENLA</name>
<dbReference type="EC" id="3.4.22.-" evidence="2"/>
<dbReference type="EMBL" id="BC084245">
    <property type="protein sequence ID" value="AAH84245.1"/>
    <property type="molecule type" value="mRNA"/>
</dbReference>
<dbReference type="RefSeq" id="NP_001088249.1">
    <property type="nucleotide sequence ID" value="NM_001094780.1"/>
</dbReference>
<dbReference type="SMR" id="Q5XH30"/>
<dbReference type="MEROPS" id="C54.004"/>
<dbReference type="DNASU" id="495080"/>
<dbReference type="GeneID" id="495080"/>
<dbReference type="KEGG" id="xla:495080"/>
<dbReference type="AGR" id="Xenbase:XB-GENE-941092"/>
<dbReference type="CTD" id="495080"/>
<dbReference type="Xenbase" id="XB-GENE-941092">
    <property type="gene designation" value="atg4c.S"/>
</dbReference>
<dbReference type="OMA" id="GERNNAD"/>
<dbReference type="OrthoDB" id="2960936at2759"/>
<dbReference type="Proteomes" id="UP000186698">
    <property type="component" value="Chromosome 4S"/>
</dbReference>
<dbReference type="Bgee" id="495080">
    <property type="expression patterns" value="Expressed in egg cell and 19 other cell types or tissues"/>
</dbReference>
<dbReference type="GO" id="GO:0005737">
    <property type="term" value="C:cytoplasm"/>
    <property type="evidence" value="ECO:0000318"/>
    <property type="project" value="GO_Central"/>
</dbReference>
<dbReference type="GO" id="GO:0004197">
    <property type="term" value="F:cysteine-type endopeptidase activity"/>
    <property type="evidence" value="ECO:0000318"/>
    <property type="project" value="GO_Central"/>
</dbReference>
<dbReference type="GO" id="GO:0008234">
    <property type="term" value="F:cysteine-type peptidase activity"/>
    <property type="evidence" value="ECO:0000250"/>
    <property type="project" value="UniProtKB"/>
</dbReference>
<dbReference type="GO" id="GO:0019786">
    <property type="term" value="F:protein-phosphatidylethanolamide deconjugating activity"/>
    <property type="evidence" value="ECO:0000318"/>
    <property type="project" value="GO_Central"/>
</dbReference>
<dbReference type="GO" id="GO:0035973">
    <property type="term" value="P:aggrephagy"/>
    <property type="evidence" value="ECO:0000318"/>
    <property type="project" value="GO_Central"/>
</dbReference>
<dbReference type="GO" id="GO:0000045">
    <property type="term" value="P:autophagosome assembly"/>
    <property type="evidence" value="ECO:0000318"/>
    <property type="project" value="GO_Central"/>
</dbReference>
<dbReference type="GO" id="GO:0006914">
    <property type="term" value="P:autophagy"/>
    <property type="evidence" value="ECO:0000250"/>
    <property type="project" value="UniProtKB"/>
</dbReference>
<dbReference type="GO" id="GO:0000423">
    <property type="term" value="P:mitophagy"/>
    <property type="evidence" value="ECO:0000318"/>
    <property type="project" value="GO_Central"/>
</dbReference>
<dbReference type="GO" id="GO:0034727">
    <property type="term" value="P:piecemeal microautophagy of the nucleus"/>
    <property type="evidence" value="ECO:0000318"/>
    <property type="project" value="GO_Central"/>
</dbReference>
<dbReference type="GO" id="GO:0051697">
    <property type="term" value="P:protein delipidation"/>
    <property type="evidence" value="ECO:0000250"/>
    <property type="project" value="UniProtKB"/>
</dbReference>
<dbReference type="GO" id="GO:0016485">
    <property type="term" value="P:protein processing"/>
    <property type="evidence" value="ECO:0000318"/>
    <property type="project" value="GO_Central"/>
</dbReference>
<dbReference type="GO" id="GO:0015031">
    <property type="term" value="P:protein transport"/>
    <property type="evidence" value="ECO:0007669"/>
    <property type="project" value="UniProtKB-KW"/>
</dbReference>
<dbReference type="InterPro" id="IPR038765">
    <property type="entry name" value="Papain-like_cys_pep_sf"/>
</dbReference>
<dbReference type="InterPro" id="IPR005078">
    <property type="entry name" value="Peptidase_C54"/>
</dbReference>
<dbReference type="InterPro" id="IPR046792">
    <property type="entry name" value="Peptidase_C54_cat"/>
</dbReference>
<dbReference type="PANTHER" id="PTHR22624">
    <property type="entry name" value="CYSTEINE PROTEASE ATG4"/>
    <property type="match status" value="1"/>
</dbReference>
<dbReference type="PANTHER" id="PTHR22624:SF38">
    <property type="entry name" value="CYSTEINE PROTEASE ATG4C"/>
    <property type="match status" value="1"/>
</dbReference>
<dbReference type="Pfam" id="PF03416">
    <property type="entry name" value="Peptidase_C54"/>
    <property type="match status" value="1"/>
</dbReference>
<dbReference type="SUPFAM" id="SSF54001">
    <property type="entry name" value="Cysteine proteinases"/>
    <property type="match status" value="1"/>
</dbReference>
<protein>
    <recommendedName>
        <fullName evidence="4">Cysteine protease ATG4C</fullName>
        <ecNumber evidence="2">3.4.22.-</ecNumber>
    </recommendedName>
    <alternativeName>
        <fullName evidence="2">Autophagy-related protein 4 homolog C</fullName>
    </alternativeName>
</protein>
<evidence type="ECO:0000250" key="1">
    <source>
        <dbReference type="UniProtKB" id="Q8BGE6"/>
    </source>
</evidence>
<evidence type="ECO:0000250" key="2">
    <source>
        <dbReference type="UniProtKB" id="Q96DT6"/>
    </source>
</evidence>
<evidence type="ECO:0000250" key="3">
    <source>
        <dbReference type="UniProtKB" id="Q9Y4P1"/>
    </source>
</evidence>
<evidence type="ECO:0000305" key="4"/>